<dbReference type="EMBL" id="CP000668">
    <property type="protein sequence ID" value="ABP42256.1"/>
    <property type="molecule type" value="Genomic_DNA"/>
</dbReference>
<dbReference type="SMR" id="A4TSJ4"/>
<dbReference type="KEGG" id="ypp:YPDSF_3915"/>
<dbReference type="GO" id="GO:0005886">
    <property type="term" value="C:plasma membrane"/>
    <property type="evidence" value="ECO:0007669"/>
    <property type="project" value="UniProtKB-SubCell"/>
</dbReference>
<dbReference type="GO" id="GO:0045259">
    <property type="term" value="C:proton-transporting ATP synthase complex"/>
    <property type="evidence" value="ECO:0007669"/>
    <property type="project" value="UniProtKB-KW"/>
</dbReference>
<dbReference type="GO" id="GO:0005524">
    <property type="term" value="F:ATP binding"/>
    <property type="evidence" value="ECO:0007669"/>
    <property type="project" value="UniProtKB-UniRule"/>
</dbReference>
<dbReference type="GO" id="GO:0046933">
    <property type="term" value="F:proton-transporting ATP synthase activity, rotational mechanism"/>
    <property type="evidence" value="ECO:0007669"/>
    <property type="project" value="UniProtKB-UniRule"/>
</dbReference>
<dbReference type="CDD" id="cd12152">
    <property type="entry name" value="F1-ATPase_delta"/>
    <property type="match status" value="1"/>
</dbReference>
<dbReference type="FunFam" id="1.20.5.440:FF:000001">
    <property type="entry name" value="ATP synthase epsilon chain"/>
    <property type="match status" value="1"/>
</dbReference>
<dbReference type="FunFam" id="2.60.15.10:FF:000001">
    <property type="entry name" value="ATP synthase epsilon chain"/>
    <property type="match status" value="1"/>
</dbReference>
<dbReference type="Gene3D" id="1.20.5.440">
    <property type="entry name" value="ATP synthase delta/epsilon subunit, C-terminal domain"/>
    <property type="match status" value="1"/>
</dbReference>
<dbReference type="Gene3D" id="2.60.15.10">
    <property type="entry name" value="F0F1 ATP synthase delta/epsilon subunit, N-terminal"/>
    <property type="match status" value="1"/>
</dbReference>
<dbReference type="HAMAP" id="MF_00530">
    <property type="entry name" value="ATP_synth_epsil_bac"/>
    <property type="match status" value="1"/>
</dbReference>
<dbReference type="InterPro" id="IPR036794">
    <property type="entry name" value="ATP_F1_dsu/esu_C_sf"/>
</dbReference>
<dbReference type="InterPro" id="IPR001469">
    <property type="entry name" value="ATP_synth_F1_dsu/esu"/>
</dbReference>
<dbReference type="InterPro" id="IPR020546">
    <property type="entry name" value="ATP_synth_F1_dsu/esu_N"/>
</dbReference>
<dbReference type="InterPro" id="IPR020547">
    <property type="entry name" value="ATP_synth_F1_esu_C"/>
</dbReference>
<dbReference type="InterPro" id="IPR036771">
    <property type="entry name" value="ATPsynth_dsu/esu_N"/>
</dbReference>
<dbReference type="NCBIfam" id="TIGR01216">
    <property type="entry name" value="ATP_synt_epsi"/>
    <property type="match status" value="1"/>
</dbReference>
<dbReference type="NCBIfam" id="NF001847">
    <property type="entry name" value="PRK00571.1-4"/>
    <property type="match status" value="1"/>
</dbReference>
<dbReference type="PANTHER" id="PTHR13822">
    <property type="entry name" value="ATP SYNTHASE DELTA/EPSILON CHAIN"/>
    <property type="match status" value="1"/>
</dbReference>
<dbReference type="PANTHER" id="PTHR13822:SF10">
    <property type="entry name" value="ATP SYNTHASE EPSILON CHAIN, CHLOROPLASTIC"/>
    <property type="match status" value="1"/>
</dbReference>
<dbReference type="Pfam" id="PF00401">
    <property type="entry name" value="ATP-synt_DE"/>
    <property type="match status" value="1"/>
</dbReference>
<dbReference type="Pfam" id="PF02823">
    <property type="entry name" value="ATP-synt_DE_N"/>
    <property type="match status" value="1"/>
</dbReference>
<dbReference type="SUPFAM" id="SSF46604">
    <property type="entry name" value="Epsilon subunit of F1F0-ATP synthase C-terminal domain"/>
    <property type="match status" value="1"/>
</dbReference>
<dbReference type="SUPFAM" id="SSF51344">
    <property type="entry name" value="Epsilon subunit of F1F0-ATP synthase N-terminal domain"/>
    <property type="match status" value="1"/>
</dbReference>
<sequence>MTYHLDVVSAEKKMFSGVVQKIQVTGSEGELGIFPGHAPLLTAIKPGMIRIVKQFGEEEFIYLSGGILEVQPSVVIVLADTAIRGLDLDEARALESKRKAEAHINNSHGDVDYAQASAELAKAIAKLRVIELTKKAM</sequence>
<accession>A4TSJ4</accession>
<comment type="function">
    <text evidence="1">Produces ATP from ADP in the presence of a proton gradient across the membrane.</text>
</comment>
<comment type="subunit">
    <text evidence="1">F-type ATPases have 2 components, CF(1) - the catalytic core - and CF(0) - the membrane proton channel. CF(1) has five subunits: alpha(3), beta(3), gamma(1), delta(1), epsilon(1). CF(0) has three main subunits: a, b and c.</text>
</comment>
<comment type="subcellular location">
    <subcellularLocation>
        <location evidence="1">Cell inner membrane</location>
        <topology evidence="1">Peripheral membrane protein</topology>
    </subcellularLocation>
</comment>
<comment type="similarity">
    <text evidence="1">Belongs to the ATPase epsilon chain family.</text>
</comment>
<feature type="chain" id="PRO_1000060986" description="ATP synthase epsilon chain">
    <location>
        <begin position="1"/>
        <end position="137"/>
    </location>
</feature>
<keyword id="KW-0066">ATP synthesis</keyword>
<keyword id="KW-0997">Cell inner membrane</keyword>
<keyword id="KW-1003">Cell membrane</keyword>
<keyword id="KW-0139">CF(1)</keyword>
<keyword id="KW-0375">Hydrogen ion transport</keyword>
<keyword id="KW-0406">Ion transport</keyword>
<keyword id="KW-0472">Membrane</keyword>
<keyword id="KW-0813">Transport</keyword>
<protein>
    <recommendedName>
        <fullName evidence="1">ATP synthase epsilon chain</fullName>
    </recommendedName>
    <alternativeName>
        <fullName evidence="1">ATP synthase F1 sector epsilon subunit</fullName>
    </alternativeName>
    <alternativeName>
        <fullName evidence="1">F-ATPase epsilon subunit</fullName>
    </alternativeName>
</protein>
<evidence type="ECO:0000255" key="1">
    <source>
        <dbReference type="HAMAP-Rule" id="MF_00530"/>
    </source>
</evidence>
<organism>
    <name type="scientific">Yersinia pestis (strain Pestoides F)</name>
    <dbReference type="NCBI Taxonomy" id="386656"/>
    <lineage>
        <taxon>Bacteria</taxon>
        <taxon>Pseudomonadati</taxon>
        <taxon>Pseudomonadota</taxon>
        <taxon>Gammaproteobacteria</taxon>
        <taxon>Enterobacterales</taxon>
        <taxon>Yersiniaceae</taxon>
        <taxon>Yersinia</taxon>
    </lineage>
</organism>
<proteinExistence type="inferred from homology"/>
<name>ATPE_YERPP</name>
<reference key="1">
    <citation type="submission" date="2007-02" db="EMBL/GenBank/DDBJ databases">
        <title>Complete sequence of chromosome of Yersinia pestis Pestoides F.</title>
        <authorList>
            <consortium name="US DOE Joint Genome Institute"/>
            <person name="Copeland A."/>
            <person name="Lucas S."/>
            <person name="Lapidus A."/>
            <person name="Barry K."/>
            <person name="Detter J.C."/>
            <person name="Glavina del Rio T."/>
            <person name="Hammon N."/>
            <person name="Israni S."/>
            <person name="Dalin E."/>
            <person name="Tice H."/>
            <person name="Pitluck S."/>
            <person name="Di Bartolo G."/>
            <person name="Chain P."/>
            <person name="Malfatti S."/>
            <person name="Shin M."/>
            <person name="Vergez L."/>
            <person name="Schmutz J."/>
            <person name="Larimer F."/>
            <person name="Land M."/>
            <person name="Hauser L."/>
            <person name="Worsham P."/>
            <person name="Chu M."/>
            <person name="Bearden S."/>
            <person name="Garcia E."/>
            <person name="Richardson P."/>
        </authorList>
    </citation>
    <scope>NUCLEOTIDE SEQUENCE [LARGE SCALE GENOMIC DNA]</scope>
    <source>
        <strain>Pestoides F</strain>
    </source>
</reference>
<gene>
    <name evidence="1" type="primary">atpC</name>
    <name type="ordered locus">YPDSF_3915</name>
</gene>